<keyword id="KW-0963">Cytoplasm</keyword>
<keyword id="KW-0275">Fatty acid biosynthesis</keyword>
<keyword id="KW-0276">Fatty acid metabolism</keyword>
<keyword id="KW-0444">Lipid biosynthesis</keyword>
<keyword id="KW-0443">Lipid metabolism</keyword>
<keyword id="KW-0460">Magnesium</keyword>
<keyword id="KW-0479">Metal-binding</keyword>
<keyword id="KW-1185">Reference proteome</keyword>
<keyword id="KW-0808">Transferase</keyword>
<evidence type="ECO:0000255" key="1">
    <source>
        <dbReference type="HAMAP-Rule" id="MF_00101"/>
    </source>
</evidence>
<proteinExistence type="inferred from homology"/>
<gene>
    <name evidence="1" type="primary">acpS</name>
    <name type="ordered locus">Geob_2943</name>
</gene>
<feature type="chain" id="PRO_1000118810" description="Holo-[acyl-carrier-protein] synthase">
    <location>
        <begin position="1"/>
        <end position="125"/>
    </location>
</feature>
<feature type="binding site" evidence="1">
    <location>
        <position position="8"/>
    </location>
    <ligand>
        <name>Mg(2+)</name>
        <dbReference type="ChEBI" id="CHEBI:18420"/>
    </ligand>
</feature>
<feature type="binding site" evidence="1">
    <location>
        <position position="57"/>
    </location>
    <ligand>
        <name>Mg(2+)</name>
        <dbReference type="ChEBI" id="CHEBI:18420"/>
    </ligand>
</feature>
<comment type="function">
    <text evidence="1">Transfers the 4'-phosphopantetheine moiety from coenzyme A to a Ser of acyl-carrier-protein.</text>
</comment>
<comment type="catalytic activity">
    <reaction evidence="1">
        <text>apo-[ACP] + CoA = holo-[ACP] + adenosine 3',5'-bisphosphate + H(+)</text>
        <dbReference type="Rhea" id="RHEA:12068"/>
        <dbReference type="Rhea" id="RHEA-COMP:9685"/>
        <dbReference type="Rhea" id="RHEA-COMP:9690"/>
        <dbReference type="ChEBI" id="CHEBI:15378"/>
        <dbReference type="ChEBI" id="CHEBI:29999"/>
        <dbReference type="ChEBI" id="CHEBI:57287"/>
        <dbReference type="ChEBI" id="CHEBI:58343"/>
        <dbReference type="ChEBI" id="CHEBI:64479"/>
        <dbReference type="EC" id="2.7.8.7"/>
    </reaction>
</comment>
<comment type="cofactor">
    <cofactor evidence="1">
        <name>Mg(2+)</name>
        <dbReference type="ChEBI" id="CHEBI:18420"/>
    </cofactor>
</comment>
<comment type="subcellular location">
    <subcellularLocation>
        <location evidence="1">Cytoplasm</location>
    </subcellularLocation>
</comment>
<comment type="similarity">
    <text evidence="1">Belongs to the P-Pant transferase superfamily. AcpS family.</text>
</comment>
<dbReference type="EC" id="2.7.8.7" evidence="1"/>
<dbReference type="EMBL" id="CP001390">
    <property type="protein sequence ID" value="ACM21286.1"/>
    <property type="molecule type" value="Genomic_DNA"/>
</dbReference>
<dbReference type="RefSeq" id="WP_012648014.1">
    <property type="nucleotide sequence ID" value="NC_011979.1"/>
</dbReference>
<dbReference type="SMR" id="B9M2U0"/>
<dbReference type="STRING" id="316067.Geob_2943"/>
<dbReference type="KEGG" id="geo:Geob_2943"/>
<dbReference type="eggNOG" id="COG0736">
    <property type="taxonomic scope" value="Bacteria"/>
</dbReference>
<dbReference type="HOGENOM" id="CLU_089696_0_2_7"/>
<dbReference type="OrthoDB" id="517356at2"/>
<dbReference type="Proteomes" id="UP000007721">
    <property type="component" value="Chromosome"/>
</dbReference>
<dbReference type="GO" id="GO:0005737">
    <property type="term" value="C:cytoplasm"/>
    <property type="evidence" value="ECO:0007669"/>
    <property type="project" value="UniProtKB-SubCell"/>
</dbReference>
<dbReference type="GO" id="GO:0008897">
    <property type="term" value="F:holo-[acyl-carrier-protein] synthase activity"/>
    <property type="evidence" value="ECO:0007669"/>
    <property type="project" value="UniProtKB-UniRule"/>
</dbReference>
<dbReference type="GO" id="GO:0000287">
    <property type="term" value="F:magnesium ion binding"/>
    <property type="evidence" value="ECO:0007669"/>
    <property type="project" value="UniProtKB-UniRule"/>
</dbReference>
<dbReference type="GO" id="GO:0006633">
    <property type="term" value="P:fatty acid biosynthetic process"/>
    <property type="evidence" value="ECO:0007669"/>
    <property type="project" value="UniProtKB-UniRule"/>
</dbReference>
<dbReference type="Gene3D" id="3.90.470.20">
    <property type="entry name" value="4'-phosphopantetheinyl transferase domain"/>
    <property type="match status" value="1"/>
</dbReference>
<dbReference type="HAMAP" id="MF_00101">
    <property type="entry name" value="AcpS"/>
    <property type="match status" value="1"/>
</dbReference>
<dbReference type="InterPro" id="IPR008278">
    <property type="entry name" value="4-PPantetheinyl_Trfase_dom"/>
</dbReference>
<dbReference type="InterPro" id="IPR037143">
    <property type="entry name" value="4-PPantetheinyl_Trfase_dom_sf"/>
</dbReference>
<dbReference type="InterPro" id="IPR002582">
    <property type="entry name" value="ACPS"/>
</dbReference>
<dbReference type="InterPro" id="IPR004568">
    <property type="entry name" value="Ppantetheine-prot_Trfase_dom"/>
</dbReference>
<dbReference type="NCBIfam" id="TIGR00516">
    <property type="entry name" value="acpS"/>
    <property type="match status" value="1"/>
</dbReference>
<dbReference type="NCBIfam" id="TIGR00556">
    <property type="entry name" value="pantethn_trn"/>
    <property type="match status" value="1"/>
</dbReference>
<dbReference type="NCBIfam" id="NF000832">
    <property type="entry name" value="PRK00070.3-2"/>
    <property type="match status" value="1"/>
</dbReference>
<dbReference type="NCBIfam" id="NF011250">
    <property type="entry name" value="PRK14656.1"/>
    <property type="match status" value="1"/>
</dbReference>
<dbReference type="Pfam" id="PF01648">
    <property type="entry name" value="ACPS"/>
    <property type="match status" value="1"/>
</dbReference>
<dbReference type="SUPFAM" id="SSF56214">
    <property type="entry name" value="4'-phosphopantetheinyl transferase"/>
    <property type="match status" value="1"/>
</dbReference>
<sequence length="125" mass="13886">MIYGTGVDIVDISRFQRFVSENNTSLLQRVFTPRELEYCSGKKHSAQHFALRFAAKEAFLKALGTGLRGGVSWQHMEIVNDRLGKPEMLLTGKAGELFAEAGLQKIFLSLSHDGNMAVAMLVLEK</sequence>
<accession>B9M2U0</accession>
<reference key="1">
    <citation type="submission" date="2009-01" db="EMBL/GenBank/DDBJ databases">
        <title>Complete sequence of Geobacter sp. FRC-32.</title>
        <authorList>
            <consortium name="US DOE Joint Genome Institute"/>
            <person name="Lucas S."/>
            <person name="Copeland A."/>
            <person name="Lapidus A."/>
            <person name="Glavina del Rio T."/>
            <person name="Dalin E."/>
            <person name="Tice H."/>
            <person name="Bruce D."/>
            <person name="Goodwin L."/>
            <person name="Pitluck S."/>
            <person name="Saunders E."/>
            <person name="Brettin T."/>
            <person name="Detter J.C."/>
            <person name="Han C."/>
            <person name="Larimer F."/>
            <person name="Land M."/>
            <person name="Hauser L."/>
            <person name="Kyrpides N."/>
            <person name="Ovchinnikova G."/>
            <person name="Kostka J."/>
            <person name="Richardson P."/>
        </authorList>
    </citation>
    <scope>NUCLEOTIDE SEQUENCE [LARGE SCALE GENOMIC DNA]</scope>
    <source>
        <strain>DSM 22248 / JCM 15807 / FRC-32</strain>
    </source>
</reference>
<protein>
    <recommendedName>
        <fullName evidence="1">Holo-[acyl-carrier-protein] synthase</fullName>
        <shortName evidence="1">Holo-ACP synthase</shortName>
        <ecNumber evidence="1">2.7.8.7</ecNumber>
    </recommendedName>
    <alternativeName>
        <fullName evidence="1">4'-phosphopantetheinyl transferase AcpS</fullName>
    </alternativeName>
</protein>
<organism>
    <name type="scientific">Geotalea daltonii (strain DSM 22248 / JCM 15807 / FRC-32)</name>
    <name type="common">Geobacter daltonii</name>
    <dbReference type="NCBI Taxonomy" id="316067"/>
    <lineage>
        <taxon>Bacteria</taxon>
        <taxon>Pseudomonadati</taxon>
        <taxon>Thermodesulfobacteriota</taxon>
        <taxon>Desulfuromonadia</taxon>
        <taxon>Geobacterales</taxon>
        <taxon>Geobacteraceae</taxon>
        <taxon>Geotalea</taxon>
    </lineage>
</organism>
<name>ACPS_GEODF</name>